<accession>A3NQS1</accession>
<reference key="1">
    <citation type="journal article" date="2010" name="Genome Biol. Evol.">
        <title>Continuing evolution of Burkholderia mallei through genome reduction and large-scale rearrangements.</title>
        <authorList>
            <person name="Losada L."/>
            <person name="Ronning C.M."/>
            <person name="DeShazer D."/>
            <person name="Woods D."/>
            <person name="Fedorova N."/>
            <person name="Kim H.S."/>
            <person name="Shabalina S.A."/>
            <person name="Pearson T.R."/>
            <person name="Brinkac L."/>
            <person name="Tan P."/>
            <person name="Nandi T."/>
            <person name="Crabtree J."/>
            <person name="Badger J."/>
            <person name="Beckstrom-Sternberg S."/>
            <person name="Saqib M."/>
            <person name="Schutzer S.E."/>
            <person name="Keim P."/>
            <person name="Nierman W.C."/>
        </authorList>
    </citation>
    <scope>NUCLEOTIDE SEQUENCE [LARGE SCALE GENOMIC DNA]</scope>
    <source>
        <strain>1106a</strain>
    </source>
</reference>
<comment type="function">
    <text evidence="1">Catalyzes the conversion of dethiobiotin (DTB) to biotin by the insertion of a sulfur atom into dethiobiotin via a radical-based mechanism.</text>
</comment>
<comment type="catalytic activity">
    <reaction evidence="1">
        <text>(4R,5S)-dethiobiotin + (sulfur carrier)-SH + 2 reduced [2Fe-2S]-[ferredoxin] + 2 S-adenosyl-L-methionine = (sulfur carrier)-H + biotin + 2 5'-deoxyadenosine + 2 L-methionine + 2 oxidized [2Fe-2S]-[ferredoxin]</text>
        <dbReference type="Rhea" id="RHEA:22060"/>
        <dbReference type="Rhea" id="RHEA-COMP:10000"/>
        <dbReference type="Rhea" id="RHEA-COMP:10001"/>
        <dbReference type="Rhea" id="RHEA-COMP:14737"/>
        <dbReference type="Rhea" id="RHEA-COMP:14739"/>
        <dbReference type="ChEBI" id="CHEBI:17319"/>
        <dbReference type="ChEBI" id="CHEBI:29917"/>
        <dbReference type="ChEBI" id="CHEBI:33737"/>
        <dbReference type="ChEBI" id="CHEBI:33738"/>
        <dbReference type="ChEBI" id="CHEBI:57586"/>
        <dbReference type="ChEBI" id="CHEBI:57844"/>
        <dbReference type="ChEBI" id="CHEBI:59789"/>
        <dbReference type="ChEBI" id="CHEBI:64428"/>
        <dbReference type="ChEBI" id="CHEBI:149473"/>
        <dbReference type="EC" id="2.8.1.6"/>
    </reaction>
</comment>
<comment type="cofactor">
    <cofactor evidence="1">
        <name>[4Fe-4S] cluster</name>
        <dbReference type="ChEBI" id="CHEBI:49883"/>
    </cofactor>
    <text evidence="1">Binds 1 [4Fe-4S] cluster. The cluster is coordinated with 3 cysteines and an exchangeable S-adenosyl-L-methionine.</text>
</comment>
<comment type="cofactor">
    <cofactor evidence="1">
        <name>[2Fe-2S] cluster</name>
        <dbReference type="ChEBI" id="CHEBI:190135"/>
    </cofactor>
    <text evidence="1">Binds 1 [2Fe-2S] cluster. The cluster is coordinated with 3 cysteines and 1 arginine.</text>
</comment>
<comment type="pathway">
    <text evidence="1">Cofactor biosynthesis; biotin biosynthesis; biotin from 7,8-diaminononanoate: step 2/2.</text>
</comment>
<comment type="subunit">
    <text evidence="1">Homodimer.</text>
</comment>
<comment type="similarity">
    <text evidence="1">Belongs to the radical SAM superfamily. Biotin synthase family.</text>
</comment>
<protein>
    <recommendedName>
        <fullName evidence="1">Biotin synthase</fullName>
        <ecNumber evidence="1">2.8.1.6</ecNumber>
    </recommendedName>
</protein>
<feature type="chain" id="PRO_0000381269" description="Biotin synthase">
    <location>
        <begin position="1"/>
        <end position="336"/>
    </location>
</feature>
<feature type="domain" description="Radical SAM core" evidence="2">
    <location>
        <begin position="54"/>
        <end position="281"/>
    </location>
</feature>
<feature type="binding site" evidence="1">
    <location>
        <position position="69"/>
    </location>
    <ligand>
        <name>[4Fe-4S] cluster</name>
        <dbReference type="ChEBI" id="CHEBI:49883"/>
        <note>4Fe-4S-S-AdoMet</note>
    </ligand>
</feature>
<feature type="binding site" evidence="1">
    <location>
        <position position="73"/>
    </location>
    <ligand>
        <name>[4Fe-4S] cluster</name>
        <dbReference type="ChEBI" id="CHEBI:49883"/>
        <note>4Fe-4S-S-AdoMet</note>
    </ligand>
</feature>
<feature type="binding site" evidence="1">
    <location>
        <position position="76"/>
    </location>
    <ligand>
        <name>[4Fe-4S] cluster</name>
        <dbReference type="ChEBI" id="CHEBI:49883"/>
        <note>4Fe-4S-S-AdoMet</note>
    </ligand>
</feature>
<feature type="binding site" evidence="1">
    <location>
        <position position="113"/>
    </location>
    <ligand>
        <name>[2Fe-2S] cluster</name>
        <dbReference type="ChEBI" id="CHEBI:190135"/>
    </ligand>
</feature>
<feature type="binding site" evidence="1">
    <location>
        <position position="144"/>
    </location>
    <ligand>
        <name>[2Fe-2S] cluster</name>
        <dbReference type="ChEBI" id="CHEBI:190135"/>
    </ligand>
</feature>
<feature type="binding site" evidence="1">
    <location>
        <position position="204"/>
    </location>
    <ligand>
        <name>[2Fe-2S] cluster</name>
        <dbReference type="ChEBI" id="CHEBI:190135"/>
    </ligand>
</feature>
<feature type="binding site" evidence="1">
    <location>
        <position position="276"/>
    </location>
    <ligand>
        <name>[2Fe-2S] cluster</name>
        <dbReference type="ChEBI" id="CHEBI:190135"/>
    </ligand>
</feature>
<keyword id="KW-0001">2Fe-2S</keyword>
<keyword id="KW-0004">4Fe-4S</keyword>
<keyword id="KW-0093">Biotin biosynthesis</keyword>
<keyword id="KW-0408">Iron</keyword>
<keyword id="KW-0411">Iron-sulfur</keyword>
<keyword id="KW-0479">Metal-binding</keyword>
<keyword id="KW-0949">S-adenosyl-L-methionine</keyword>
<keyword id="KW-0808">Transferase</keyword>
<sequence>MTEAQTACATTETPVAAPAAPRWRVADVIALYELPFNDLLFRAQQTHREHFDANAIQLSTLLSIKTGGCEEDCGYCSQSAHHDTGLKAEKLMEVDAVLAAARTAKENGATRFCMGAAWRNPKDRHIEPIKEMIRGVKDMGLETCVTLGMLEEHQAKALAEAGLDYYNHNLDTSPEFYGQIISTRTYQDRLDTLERVRDAGINVCCGGIIGMGESRRERAGLIAQLANMNPYPESVPINNLVAIEGTPLENAQALDPFEFVRTIAVARITMPKAMVRLSAGREQLDDAMQALCFLAGANSMFYGDVLLTTGNPRAEADRKLLARLGMWASEASQLSA</sequence>
<proteinExistence type="inferred from homology"/>
<dbReference type="EC" id="2.8.1.6" evidence="1"/>
<dbReference type="EMBL" id="CP000572">
    <property type="protein sequence ID" value="ABN92513.1"/>
    <property type="molecule type" value="Genomic_DNA"/>
</dbReference>
<dbReference type="RefSeq" id="WP_004548304.1">
    <property type="nucleotide sequence ID" value="NC_009076.1"/>
</dbReference>
<dbReference type="SMR" id="A3NQS1"/>
<dbReference type="KEGG" id="bpl:BURPS1106A_0409"/>
<dbReference type="HOGENOM" id="CLU_033172_1_2_4"/>
<dbReference type="UniPathway" id="UPA00078">
    <property type="reaction ID" value="UER00162"/>
</dbReference>
<dbReference type="Proteomes" id="UP000006738">
    <property type="component" value="Chromosome I"/>
</dbReference>
<dbReference type="GO" id="GO:0051537">
    <property type="term" value="F:2 iron, 2 sulfur cluster binding"/>
    <property type="evidence" value="ECO:0007669"/>
    <property type="project" value="UniProtKB-KW"/>
</dbReference>
<dbReference type="GO" id="GO:0051539">
    <property type="term" value="F:4 iron, 4 sulfur cluster binding"/>
    <property type="evidence" value="ECO:0007669"/>
    <property type="project" value="UniProtKB-KW"/>
</dbReference>
<dbReference type="GO" id="GO:0004076">
    <property type="term" value="F:biotin synthase activity"/>
    <property type="evidence" value="ECO:0007669"/>
    <property type="project" value="UniProtKB-UniRule"/>
</dbReference>
<dbReference type="GO" id="GO:0005506">
    <property type="term" value="F:iron ion binding"/>
    <property type="evidence" value="ECO:0007669"/>
    <property type="project" value="UniProtKB-UniRule"/>
</dbReference>
<dbReference type="GO" id="GO:0009102">
    <property type="term" value="P:biotin biosynthetic process"/>
    <property type="evidence" value="ECO:0007669"/>
    <property type="project" value="UniProtKB-UniRule"/>
</dbReference>
<dbReference type="CDD" id="cd01335">
    <property type="entry name" value="Radical_SAM"/>
    <property type="match status" value="1"/>
</dbReference>
<dbReference type="FunFam" id="3.20.20.70:FF:000011">
    <property type="entry name" value="Biotin synthase"/>
    <property type="match status" value="1"/>
</dbReference>
<dbReference type="Gene3D" id="3.20.20.70">
    <property type="entry name" value="Aldolase class I"/>
    <property type="match status" value="1"/>
</dbReference>
<dbReference type="HAMAP" id="MF_01694">
    <property type="entry name" value="BioB"/>
    <property type="match status" value="1"/>
</dbReference>
<dbReference type="InterPro" id="IPR013785">
    <property type="entry name" value="Aldolase_TIM"/>
</dbReference>
<dbReference type="InterPro" id="IPR010722">
    <property type="entry name" value="BATS_dom"/>
</dbReference>
<dbReference type="InterPro" id="IPR002684">
    <property type="entry name" value="Biotin_synth/BioAB"/>
</dbReference>
<dbReference type="InterPro" id="IPR024177">
    <property type="entry name" value="Biotin_synthase"/>
</dbReference>
<dbReference type="InterPro" id="IPR006638">
    <property type="entry name" value="Elp3/MiaA/NifB-like_rSAM"/>
</dbReference>
<dbReference type="InterPro" id="IPR007197">
    <property type="entry name" value="rSAM"/>
</dbReference>
<dbReference type="NCBIfam" id="TIGR00433">
    <property type="entry name" value="bioB"/>
    <property type="match status" value="1"/>
</dbReference>
<dbReference type="PANTHER" id="PTHR22976">
    <property type="entry name" value="BIOTIN SYNTHASE"/>
    <property type="match status" value="1"/>
</dbReference>
<dbReference type="PANTHER" id="PTHR22976:SF2">
    <property type="entry name" value="BIOTIN SYNTHASE, MITOCHONDRIAL"/>
    <property type="match status" value="1"/>
</dbReference>
<dbReference type="Pfam" id="PF06968">
    <property type="entry name" value="BATS"/>
    <property type="match status" value="1"/>
</dbReference>
<dbReference type="Pfam" id="PF04055">
    <property type="entry name" value="Radical_SAM"/>
    <property type="match status" value="1"/>
</dbReference>
<dbReference type="PIRSF" id="PIRSF001619">
    <property type="entry name" value="Biotin_synth"/>
    <property type="match status" value="1"/>
</dbReference>
<dbReference type="SFLD" id="SFLDF00272">
    <property type="entry name" value="biotin_synthase"/>
    <property type="match status" value="1"/>
</dbReference>
<dbReference type="SFLD" id="SFLDS00029">
    <property type="entry name" value="Radical_SAM"/>
    <property type="match status" value="1"/>
</dbReference>
<dbReference type="SMART" id="SM00876">
    <property type="entry name" value="BATS"/>
    <property type="match status" value="1"/>
</dbReference>
<dbReference type="SMART" id="SM00729">
    <property type="entry name" value="Elp3"/>
    <property type="match status" value="1"/>
</dbReference>
<dbReference type="SUPFAM" id="SSF102114">
    <property type="entry name" value="Radical SAM enzymes"/>
    <property type="match status" value="1"/>
</dbReference>
<dbReference type="PROSITE" id="PS51918">
    <property type="entry name" value="RADICAL_SAM"/>
    <property type="match status" value="1"/>
</dbReference>
<evidence type="ECO:0000255" key="1">
    <source>
        <dbReference type="HAMAP-Rule" id="MF_01694"/>
    </source>
</evidence>
<evidence type="ECO:0000255" key="2">
    <source>
        <dbReference type="PROSITE-ProRule" id="PRU01266"/>
    </source>
</evidence>
<gene>
    <name evidence="1" type="primary">bioB</name>
    <name type="ordered locus">BURPS1106A_0409</name>
</gene>
<organism>
    <name type="scientific">Burkholderia pseudomallei (strain 1106a)</name>
    <dbReference type="NCBI Taxonomy" id="357348"/>
    <lineage>
        <taxon>Bacteria</taxon>
        <taxon>Pseudomonadati</taxon>
        <taxon>Pseudomonadota</taxon>
        <taxon>Betaproteobacteria</taxon>
        <taxon>Burkholderiales</taxon>
        <taxon>Burkholderiaceae</taxon>
        <taxon>Burkholderia</taxon>
        <taxon>pseudomallei group</taxon>
    </lineage>
</organism>
<name>BIOB_BURP0</name>